<name>MURG_RHORT</name>
<sequence>MNASMPRDGALLVNAPLHIALAAGGTGGHVFPAEALAGELIRRGHKLTLITDKRGHVYGGTLGLLDTKRILAGGVAGRGVIGRLRGMIELAMGSLQAYGLLRRLRPDVVVGFGGYASVPTMLAAIRLKLPTVVHEQNAVPGRANRLLAARVSRYAVSFARAERPRGARPVVVGMPVRPSVLALRGEGYDAPRPGLDFRLLITGGSQGARVFATLVPQALALLSPAHRARLRVTQQCRPEDIEAVRATYEAQGIDALLSAFFSDLPERLRDAHLVICRSGASTVGELAALGRPAILVPFPHAIDDHQTANARGLDEVGGGWLMPQAALTPQALAERLGELMDDPDVLVRAAQCARGAGVPDAAVRLADLVSATADHRVPEMPPKEISA</sequence>
<gene>
    <name evidence="1" type="primary">murG</name>
    <name type="ordered locus">Rru_A0950</name>
</gene>
<organism>
    <name type="scientific">Rhodospirillum rubrum (strain ATCC 11170 / ATH 1.1.1 / DSM 467 / LMG 4362 / NCIMB 8255 / S1)</name>
    <dbReference type="NCBI Taxonomy" id="269796"/>
    <lineage>
        <taxon>Bacteria</taxon>
        <taxon>Pseudomonadati</taxon>
        <taxon>Pseudomonadota</taxon>
        <taxon>Alphaproteobacteria</taxon>
        <taxon>Rhodospirillales</taxon>
        <taxon>Rhodospirillaceae</taxon>
        <taxon>Rhodospirillum</taxon>
    </lineage>
</organism>
<reference key="1">
    <citation type="journal article" date="2011" name="Stand. Genomic Sci.">
        <title>Complete genome sequence of Rhodospirillum rubrum type strain (S1).</title>
        <authorList>
            <person name="Munk A.C."/>
            <person name="Copeland A."/>
            <person name="Lucas S."/>
            <person name="Lapidus A."/>
            <person name="Del Rio T.G."/>
            <person name="Barry K."/>
            <person name="Detter J.C."/>
            <person name="Hammon N."/>
            <person name="Israni S."/>
            <person name="Pitluck S."/>
            <person name="Brettin T."/>
            <person name="Bruce D."/>
            <person name="Han C."/>
            <person name="Tapia R."/>
            <person name="Gilna P."/>
            <person name="Schmutz J."/>
            <person name="Larimer F."/>
            <person name="Land M."/>
            <person name="Kyrpides N.C."/>
            <person name="Mavromatis K."/>
            <person name="Richardson P."/>
            <person name="Rohde M."/>
            <person name="Goeker M."/>
            <person name="Klenk H.P."/>
            <person name="Zhang Y."/>
            <person name="Roberts G.P."/>
            <person name="Reslewic S."/>
            <person name="Schwartz D.C."/>
        </authorList>
    </citation>
    <scope>NUCLEOTIDE SEQUENCE [LARGE SCALE GENOMIC DNA]</scope>
    <source>
        <strain>ATCC 11170 / ATH 1.1.1 / DSM 467 / LMG 4362 / NCIMB 8255 / S1</strain>
    </source>
</reference>
<feature type="chain" id="PRO_0000315156" description="UDP-N-acetylglucosamine--N-acetylmuramyl-(pentapeptide) pyrophosphoryl-undecaprenol N-acetylglucosamine transferase">
    <location>
        <begin position="1"/>
        <end position="387"/>
    </location>
</feature>
<feature type="binding site" evidence="1">
    <location>
        <begin position="26"/>
        <end position="28"/>
    </location>
    <ligand>
        <name>UDP-N-acetyl-alpha-D-glucosamine</name>
        <dbReference type="ChEBI" id="CHEBI:57705"/>
    </ligand>
</feature>
<feature type="binding site" evidence="1">
    <location>
        <position position="137"/>
    </location>
    <ligand>
        <name>UDP-N-acetyl-alpha-D-glucosamine</name>
        <dbReference type="ChEBI" id="CHEBI:57705"/>
    </ligand>
</feature>
<feature type="binding site" evidence="1">
    <location>
        <position position="177"/>
    </location>
    <ligand>
        <name>UDP-N-acetyl-alpha-D-glucosamine</name>
        <dbReference type="ChEBI" id="CHEBI:57705"/>
    </ligand>
</feature>
<feature type="binding site" evidence="1">
    <location>
        <position position="205"/>
    </location>
    <ligand>
        <name>UDP-N-acetyl-alpha-D-glucosamine</name>
        <dbReference type="ChEBI" id="CHEBI:57705"/>
    </ligand>
</feature>
<feature type="binding site" evidence="1">
    <location>
        <position position="306"/>
    </location>
    <ligand>
        <name>UDP-N-acetyl-alpha-D-glucosamine</name>
        <dbReference type="ChEBI" id="CHEBI:57705"/>
    </ligand>
</feature>
<dbReference type="EC" id="2.4.1.227" evidence="1"/>
<dbReference type="EMBL" id="CP000230">
    <property type="protein sequence ID" value="ABC21751.1"/>
    <property type="molecule type" value="Genomic_DNA"/>
</dbReference>
<dbReference type="RefSeq" id="WP_011388705.1">
    <property type="nucleotide sequence ID" value="NC_007643.1"/>
</dbReference>
<dbReference type="RefSeq" id="YP_426038.1">
    <property type="nucleotide sequence ID" value="NC_007643.1"/>
</dbReference>
<dbReference type="SMR" id="Q2RVU4"/>
<dbReference type="STRING" id="269796.Rru_A0950"/>
<dbReference type="CAZy" id="GT28">
    <property type="family name" value="Glycosyltransferase Family 28"/>
</dbReference>
<dbReference type="EnsemblBacteria" id="ABC21751">
    <property type="protein sequence ID" value="ABC21751"/>
    <property type="gene ID" value="Rru_A0950"/>
</dbReference>
<dbReference type="KEGG" id="rru:Rru_A0950"/>
<dbReference type="PATRIC" id="fig|269796.9.peg.1006"/>
<dbReference type="eggNOG" id="COG0707">
    <property type="taxonomic scope" value="Bacteria"/>
</dbReference>
<dbReference type="HOGENOM" id="CLU_037404_2_1_5"/>
<dbReference type="PhylomeDB" id="Q2RVU4"/>
<dbReference type="UniPathway" id="UPA00219"/>
<dbReference type="Proteomes" id="UP000001929">
    <property type="component" value="Chromosome"/>
</dbReference>
<dbReference type="GO" id="GO:0005886">
    <property type="term" value="C:plasma membrane"/>
    <property type="evidence" value="ECO:0007669"/>
    <property type="project" value="UniProtKB-SubCell"/>
</dbReference>
<dbReference type="GO" id="GO:0051991">
    <property type="term" value="F:UDP-N-acetyl-D-glucosamine:N-acetylmuramoyl-L-alanyl-D-glutamyl-meso-2,6-diaminopimelyl-D-alanyl-D-alanine-diphosphoundecaprenol 4-beta-N-acetylglucosaminlytransferase activity"/>
    <property type="evidence" value="ECO:0007669"/>
    <property type="project" value="RHEA"/>
</dbReference>
<dbReference type="GO" id="GO:0050511">
    <property type="term" value="F:undecaprenyldiphospho-muramoylpentapeptide beta-N-acetylglucosaminyltransferase activity"/>
    <property type="evidence" value="ECO:0007669"/>
    <property type="project" value="UniProtKB-UniRule"/>
</dbReference>
<dbReference type="GO" id="GO:0005975">
    <property type="term" value="P:carbohydrate metabolic process"/>
    <property type="evidence" value="ECO:0007669"/>
    <property type="project" value="InterPro"/>
</dbReference>
<dbReference type="GO" id="GO:0051301">
    <property type="term" value="P:cell division"/>
    <property type="evidence" value="ECO:0007669"/>
    <property type="project" value="UniProtKB-KW"/>
</dbReference>
<dbReference type="GO" id="GO:0071555">
    <property type="term" value="P:cell wall organization"/>
    <property type="evidence" value="ECO:0007669"/>
    <property type="project" value="UniProtKB-KW"/>
</dbReference>
<dbReference type="GO" id="GO:0030259">
    <property type="term" value="P:lipid glycosylation"/>
    <property type="evidence" value="ECO:0007669"/>
    <property type="project" value="UniProtKB-UniRule"/>
</dbReference>
<dbReference type="GO" id="GO:0009252">
    <property type="term" value="P:peptidoglycan biosynthetic process"/>
    <property type="evidence" value="ECO:0007669"/>
    <property type="project" value="UniProtKB-UniRule"/>
</dbReference>
<dbReference type="GO" id="GO:0008360">
    <property type="term" value="P:regulation of cell shape"/>
    <property type="evidence" value="ECO:0007669"/>
    <property type="project" value="UniProtKB-KW"/>
</dbReference>
<dbReference type="CDD" id="cd03785">
    <property type="entry name" value="GT28_MurG"/>
    <property type="match status" value="1"/>
</dbReference>
<dbReference type="Gene3D" id="3.40.50.2000">
    <property type="entry name" value="Glycogen Phosphorylase B"/>
    <property type="match status" value="2"/>
</dbReference>
<dbReference type="HAMAP" id="MF_00033">
    <property type="entry name" value="MurG"/>
    <property type="match status" value="1"/>
</dbReference>
<dbReference type="InterPro" id="IPR006009">
    <property type="entry name" value="GlcNAc_MurG"/>
</dbReference>
<dbReference type="InterPro" id="IPR007235">
    <property type="entry name" value="Glyco_trans_28_C"/>
</dbReference>
<dbReference type="InterPro" id="IPR004276">
    <property type="entry name" value="GlycoTrans_28_N"/>
</dbReference>
<dbReference type="NCBIfam" id="TIGR01133">
    <property type="entry name" value="murG"/>
    <property type="match status" value="1"/>
</dbReference>
<dbReference type="PANTHER" id="PTHR21015:SF22">
    <property type="entry name" value="GLYCOSYLTRANSFERASE"/>
    <property type="match status" value="1"/>
</dbReference>
<dbReference type="PANTHER" id="PTHR21015">
    <property type="entry name" value="UDP-N-ACETYLGLUCOSAMINE--N-ACETYLMURAMYL-(PENTAPEPTIDE) PYROPHOSPHORYL-UNDECAPRENOL N-ACETYLGLUCOSAMINE TRANSFERASE 1"/>
    <property type="match status" value="1"/>
</dbReference>
<dbReference type="Pfam" id="PF04101">
    <property type="entry name" value="Glyco_tran_28_C"/>
    <property type="match status" value="1"/>
</dbReference>
<dbReference type="Pfam" id="PF03033">
    <property type="entry name" value="Glyco_transf_28"/>
    <property type="match status" value="1"/>
</dbReference>
<dbReference type="SUPFAM" id="SSF53756">
    <property type="entry name" value="UDP-Glycosyltransferase/glycogen phosphorylase"/>
    <property type="match status" value="1"/>
</dbReference>
<accession>Q2RVU4</accession>
<evidence type="ECO:0000255" key="1">
    <source>
        <dbReference type="HAMAP-Rule" id="MF_00033"/>
    </source>
</evidence>
<protein>
    <recommendedName>
        <fullName evidence="1">UDP-N-acetylglucosamine--N-acetylmuramyl-(pentapeptide) pyrophosphoryl-undecaprenol N-acetylglucosamine transferase</fullName>
        <ecNumber evidence="1">2.4.1.227</ecNumber>
    </recommendedName>
    <alternativeName>
        <fullName evidence="1">Undecaprenyl-PP-MurNAc-pentapeptide-UDPGlcNAc GlcNAc transferase</fullName>
    </alternativeName>
</protein>
<proteinExistence type="inferred from homology"/>
<keyword id="KW-0131">Cell cycle</keyword>
<keyword id="KW-0132">Cell division</keyword>
<keyword id="KW-0997">Cell inner membrane</keyword>
<keyword id="KW-1003">Cell membrane</keyword>
<keyword id="KW-0133">Cell shape</keyword>
<keyword id="KW-0961">Cell wall biogenesis/degradation</keyword>
<keyword id="KW-0328">Glycosyltransferase</keyword>
<keyword id="KW-0472">Membrane</keyword>
<keyword id="KW-0573">Peptidoglycan synthesis</keyword>
<keyword id="KW-1185">Reference proteome</keyword>
<keyword id="KW-0808">Transferase</keyword>
<comment type="function">
    <text evidence="1">Cell wall formation. Catalyzes the transfer of a GlcNAc subunit on undecaprenyl-pyrophosphoryl-MurNAc-pentapeptide (lipid intermediate I) to form undecaprenyl-pyrophosphoryl-MurNAc-(pentapeptide)GlcNAc (lipid intermediate II).</text>
</comment>
<comment type="catalytic activity">
    <reaction evidence="1">
        <text>di-trans,octa-cis-undecaprenyl diphospho-N-acetyl-alpha-D-muramoyl-L-alanyl-D-glutamyl-meso-2,6-diaminopimeloyl-D-alanyl-D-alanine + UDP-N-acetyl-alpha-D-glucosamine = di-trans,octa-cis-undecaprenyl diphospho-[N-acetyl-alpha-D-glucosaminyl-(1-&gt;4)]-N-acetyl-alpha-D-muramoyl-L-alanyl-D-glutamyl-meso-2,6-diaminopimeloyl-D-alanyl-D-alanine + UDP + H(+)</text>
        <dbReference type="Rhea" id="RHEA:31227"/>
        <dbReference type="ChEBI" id="CHEBI:15378"/>
        <dbReference type="ChEBI" id="CHEBI:57705"/>
        <dbReference type="ChEBI" id="CHEBI:58223"/>
        <dbReference type="ChEBI" id="CHEBI:61387"/>
        <dbReference type="ChEBI" id="CHEBI:61388"/>
        <dbReference type="EC" id="2.4.1.227"/>
    </reaction>
</comment>
<comment type="pathway">
    <text evidence="1">Cell wall biogenesis; peptidoglycan biosynthesis.</text>
</comment>
<comment type="subcellular location">
    <subcellularLocation>
        <location evidence="1">Cell inner membrane</location>
        <topology evidence="1">Peripheral membrane protein</topology>
        <orientation evidence="1">Cytoplasmic side</orientation>
    </subcellularLocation>
</comment>
<comment type="similarity">
    <text evidence="1">Belongs to the glycosyltransferase 28 family. MurG subfamily.</text>
</comment>